<organism>
    <name type="scientific">Paramagnetospirillum magneticum (strain ATCC 700264 / AMB-1)</name>
    <name type="common">Magnetospirillum magneticum</name>
    <dbReference type="NCBI Taxonomy" id="342108"/>
    <lineage>
        <taxon>Bacteria</taxon>
        <taxon>Pseudomonadati</taxon>
        <taxon>Pseudomonadota</taxon>
        <taxon>Alphaproteobacteria</taxon>
        <taxon>Rhodospirillales</taxon>
        <taxon>Magnetospirillaceae</taxon>
        <taxon>Paramagnetospirillum</taxon>
    </lineage>
</organism>
<keyword id="KW-0450">Lipoyl</keyword>
<gene>
    <name evidence="1" type="primary">gcvH</name>
    <name type="ordered locus">amb0767</name>
</gene>
<evidence type="ECO:0000255" key="1">
    <source>
        <dbReference type="HAMAP-Rule" id="MF_00272"/>
    </source>
</evidence>
<evidence type="ECO:0000255" key="2">
    <source>
        <dbReference type="PROSITE-ProRule" id="PRU01066"/>
    </source>
</evidence>
<dbReference type="EMBL" id="AP007255">
    <property type="protein sequence ID" value="BAE49571.1"/>
    <property type="molecule type" value="Genomic_DNA"/>
</dbReference>
<dbReference type="RefSeq" id="WP_011383210.1">
    <property type="nucleotide sequence ID" value="NC_007626.1"/>
</dbReference>
<dbReference type="SMR" id="Q2W9A4"/>
<dbReference type="STRING" id="342108.amb0767"/>
<dbReference type="KEGG" id="mag:amb0767"/>
<dbReference type="HOGENOM" id="CLU_097408_2_2_5"/>
<dbReference type="OrthoDB" id="9796712at2"/>
<dbReference type="Proteomes" id="UP000007058">
    <property type="component" value="Chromosome"/>
</dbReference>
<dbReference type="GO" id="GO:0005737">
    <property type="term" value="C:cytoplasm"/>
    <property type="evidence" value="ECO:0007669"/>
    <property type="project" value="TreeGrafter"/>
</dbReference>
<dbReference type="GO" id="GO:0005960">
    <property type="term" value="C:glycine cleavage complex"/>
    <property type="evidence" value="ECO:0007669"/>
    <property type="project" value="InterPro"/>
</dbReference>
<dbReference type="GO" id="GO:0019464">
    <property type="term" value="P:glycine decarboxylation via glycine cleavage system"/>
    <property type="evidence" value="ECO:0007669"/>
    <property type="project" value="UniProtKB-UniRule"/>
</dbReference>
<dbReference type="CDD" id="cd06848">
    <property type="entry name" value="GCS_H"/>
    <property type="match status" value="1"/>
</dbReference>
<dbReference type="Gene3D" id="2.40.50.100">
    <property type="match status" value="1"/>
</dbReference>
<dbReference type="HAMAP" id="MF_00272">
    <property type="entry name" value="GcvH"/>
    <property type="match status" value="1"/>
</dbReference>
<dbReference type="InterPro" id="IPR003016">
    <property type="entry name" value="2-oxoA_DH_lipoyl-BS"/>
</dbReference>
<dbReference type="InterPro" id="IPR000089">
    <property type="entry name" value="Biotin_lipoyl"/>
</dbReference>
<dbReference type="InterPro" id="IPR002930">
    <property type="entry name" value="GCV_H"/>
</dbReference>
<dbReference type="InterPro" id="IPR033753">
    <property type="entry name" value="GCV_H/Fam206"/>
</dbReference>
<dbReference type="InterPro" id="IPR017453">
    <property type="entry name" value="GCV_H_sub"/>
</dbReference>
<dbReference type="InterPro" id="IPR011053">
    <property type="entry name" value="Single_hybrid_motif"/>
</dbReference>
<dbReference type="NCBIfam" id="TIGR00527">
    <property type="entry name" value="gcvH"/>
    <property type="match status" value="1"/>
</dbReference>
<dbReference type="NCBIfam" id="NF002270">
    <property type="entry name" value="PRK01202.1"/>
    <property type="match status" value="1"/>
</dbReference>
<dbReference type="PANTHER" id="PTHR11715">
    <property type="entry name" value="GLYCINE CLEAVAGE SYSTEM H PROTEIN"/>
    <property type="match status" value="1"/>
</dbReference>
<dbReference type="PANTHER" id="PTHR11715:SF3">
    <property type="entry name" value="GLYCINE CLEAVAGE SYSTEM H PROTEIN-RELATED"/>
    <property type="match status" value="1"/>
</dbReference>
<dbReference type="Pfam" id="PF01597">
    <property type="entry name" value="GCV_H"/>
    <property type="match status" value="1"/>
</dbReference>
<dbReference type="SUPFAM" id="SSF51230">
    <property type="entry name" value="Single hybrid motif"/>
    <property type="match status" value="1"/>
</dbReference>
<dbReference type="PROSITE" id="PS50968">
    <property type="entry name" value="BIOTINYL_LIPOYL"/>
    <property type="match status" value="1"/>
</dbReference>
<dbReference type="PROSITE" id="PS00189">
    <property type="entry name" value="LIPOYL"/>
    <property type="match status" value="1"/>
</dbReference>
<protein>
    <recommendedName>
        <fullName evidence="1">Glycine cleavage system H protein</fullName>
    </recommendedName>
</protein>
<sequence length="125" mass="13173">MSSKRFTKDHEWIEVDGDVGTVGISDYAQHALGDVVFVEVPEPGRVVAKGAEAAVVESVKAASEVYSPVSGTVTAGNQAIVDQPGLVNEAAEGAAWFFKLTLSNPGEVADLMDQAAYDAYLKTLE</sequence>
<comment type="function">
    <text evidence="1">The glycine cleavage system catalyzes the degradation of glycine. The H protein shuttles the methylamine group of glycine from the P protein to the T protein.</text>
</comment>
<comment type="cofactor">
    <cofactor evidence="1">
        <name>(R)-lipoate</name>
        <dbReference type="ChEBI" id="CHEBI:83088"/>
    </cofactor>
    <text evidence="1">Binds 1 lipoyl cofactor covalently.</text>
</comment>
<comment type="subunit">
    <text evidence="1">The glycine cleavage system is composed of four proteins: P, T, L and H.</text>
</comment>
<comment type="similarity">
    <text evidence="1">Belongs to the GcvH family.</text>
</comment>
<feature type="chain" id="PRO_0000302387" description="Glycine cleavage system H protein">
    <location>
        <begin position="1"/>
        <end position="125"/>
    </location>
</feature>
<feature type="domain" description="Lipoyl-binding" evidence="2">
    <location>
        <begin position="19"/>
        <end position="101"/>
    </location>
</feature>
<feature type="modified residue" description="N6-lipoyllysine" evidence="1">
    <location>
        <position position="60"/>
    </location>
</feature>
<accession>Q2W9A4</accession>
<name>GCSH_PARM1</name>
<proteinExistence type="inferred from homology"/>
<reference key="1">
    <citation type="journal article" date="2005" name="DNA Res.">
        <title>Complete genome sequence of the facultative anaerobic magnetotactic bacterium Magnetospirillum sp. strain AMB-1.</title>
        <authorList>
            <person name="Matsunaga T."/>
            <person name="Okamura Y."/>
            <person name="Fukuda Y."/>
            <person name="Wahyudi A.T."/>
            <person name="Murase Y."/>
            <person name="Takeyama H."/>
        </authorList>
    </citation>
    <scope>NUCLEOTIDE SEQUENCE [LARGE SCALE GENOMIC DNA]</scope>
    <source>
        <strain>ATCC 700264 / AMB-1</strain>
    </source>
</reference>